<comment type="function">
    <text evidence="4 5 6 7 8 9 10 12">Transcriptional activator that functions with GLK2 to promote chloroplast development. Acts as an activator of nuclear photosynthetic genes involved in chlorophyll biosynthesis, light harvesting, and electron transport. Acts in a cell-autonomous manner to coordinate and maintain the photosynthetic apparatus within individual cells. May function in photosynthetic capacity optimization by integrating responses to variable environmental and endogenous cues (PubMed:11828027, PubMed:12220263, PubMed:17533111, PubMed:18643989, PubMed:19376934, PubMed:19383092, PubMed:19726569). Prevents premature senescence (PubMed:23459204).</text>
</comment>
<comment type="subunit">
    <text evidence="12">Interacts with NAC92.</text>
</comment>
<comment type="interaction">
    <interactant intactId="EBI-4442165">
        <id>Q9SIV3</id>
    </interactant>
    <interactant intactId="EBI-15191587">
        <id>F4K1A8</id>
        <label>At5g26749</label>
    </interactant>
    <organismsDiffer>false</organismsDiffer>
    <experiments>3</experiments>
</comment>
<comment type="interaction">
    <interactant intactId="EBI-4442165">
        <id>Q9SIV3</id>
    </interactant>
    <interactant intactId="EBI-15193945">
        <id>O82595</id>
        <label>NGA4</label>
    </interactant>
    <organismsDiffer>false</organismsDiffer>
    <experiments>3</experiments>
</comment>
<comment type="subcellular location">
    <subcellularLocation>
        <location evidence="1">Nucleus</location>
    </subcellularLocation>
</comment>
<comment type="alternative products">
    <event type="alternative splicing"/>
    <isoform>
        <id>Q9SIV3-1</id>
        <name>1</name>
        <sequence type="displayed"/>
    </isoform>
    <text>A number of isoforms are produced. According to EST sequences.</text>
</comment>
<comment type="tissue specificity">
    <text evidence="5">Expressed in rosette and cauline leaves. Expressed at low levels in cotyledons and shoots.</text>
</comment>
<comment type="induction">
    <text evidence="5 11">By light. Repressed by BZR2.</text>
</comment>
<comment type="disruption phenotype">
    <text evidence="5 12">No visible phenotype (PubMed:12220263). Pale-green seedlings in double mutants glk1/glk2 (PubMed:23459204).</text>
</comment>
<comment type="miscellaneous">
    <text>Plants overexpressing GLK1 have a delay in flowering under long days, show high constitutive expression of genes encoding disease defense related proteins and are resistant to the pathogen F.graminearum.</text>
</comment>
<dbReference type="EMBL" id="AB062489">
    <property type="protein sequence ID" value="BAB78466.1"/>
    <property type="molecule type" value="mRNA"/>
</dbReference>
<dbReference type="EMBL" id="AY026772">
    <property type="protein sequence ID" value="AAK16743.1"/>
    <property type="molecule type" value="mRNA"/>
</dbReference>
<dbReference type="EMBL" id="AY028367">
    <property type="protein sequence ID" value="AAK20120.1"/>
    <property type="molecule type" value="Genomic_DNA"/>
</dbReference>
<dbReference type="EMBL" id="AC007048">
    <property type="protein sequence ID" value="AAD21709.2"/>
    <property type="molecule type" value="Genomic_DNA"/>
</dbReference>
<dbReference type="EMBL" id="AC007109">
    <property type="protein sequence ID" value="AAM15392.1"/>
    <property type="molecule type" value="Genomic_DNA"/>
</dbReference>
<dbReference type="EMBL" id="CP002685">
    <property type="protein sequence ID" value="AEC07030.1"/>
    <property type="molecule type" value="Genomic_DNA"/>
</dbReference>
<dbReference type="EMBL" id="AY054600">
    <property type="protein sequence ID" value="AAK96791.1"/>
    <property type="molecule type" value="mRNA"/>
</dbReference>
<dbReference type="EMBL" id="AY081485">
    <property type="protein sequence ID" value="AAM10047.1"/>
    <property type="molecule type" value="mRNA"/>
</dbReference>
<dbReference type="PIR" id="H84590">
    <property type="entry name" value="H84590"/>
</dbReference>
<dbReference type="RefSeq" id="NP_565476.1">
    <molecule id="Q9SIV3-1"/>
    <property type="nucleotide sequence ID" value="NM_127617.3"/>
</dbReference>
<dbReference type="SMR" id="Q9SIV3"/>
<dbReference type="BioGRID" id="1932">
    <property type="interactions" value="59"/>
</dbReference>
<dbReference type="FunCoup" id="Q9SIV3">
    <property type="interactions" value="1085"/>
</dbReference>
<dbReference type="IntAct" id="Q9SIV3">
    <property type="interactions" value="58"/>
</dbReference>
<dbReference type="MINT" id="Q9SIV3"/>
<dbReference type="STRING" id="3702.Q9SIV3"/>
<dbReference type="PaxDb" id="3702-AT2G20570.2"/>
<dbReference type="ProteomicsDB" id="248449">
    <molecule id="Q9SIV3-1"/>
</dbReference>
<dbReference type="EnsemblPlants" id="AT2G20570.1">
    <molecule id="Q9SIV3-1"/>
    <property type="protein sequence ID" value="AT2G20570.1"/>
    <property type="gene ID" value="AT2G20570"/>
</dbReference>
<dbReference type="GeneID" id="816579"/>
<dbReference type="Gramene" id="AT2G20570.1">
    <molecule id="Q9SIV3-1"/>
    <property type="protein sequence ID" value="AT2G20570.1"/>
    <property type="gene ID" value="AT2G20570"/>
</dbReference>
<dbReference type="KEGG" id="ath:AT2G20570"/>
<dbReference type="Araport" id="AT2G20570"/>
<dbReference type="TAIR" id="AT2G20570">
    <property type="gene designation" value="GPRI1"/>
</dbReference>
<dbReference type="eggNOG" id="ENOG502S88Y">
    <property type="taxonomic scope" value="Eukaryota"/>
</dbReference>
<dbReference type="HOGENOM" id="CLU_050767_0_0_1"/>
<dbReference type="InParanoid" id="Q9SIV3"/>
<dbReference type="OMA" id="FPEFAIH"/>
<dbReference type="PhylomeDB" id="Q9SIV3"/>
<dbReference type="PRO" id="PR:Q9SIV3"/>
<dbReference type="Proteomes" id="UP000006548">
    <property type="component" value="Chromosome 2"/>
</dbReference>
<dbReference type="ExpressionAtlas" id="Q9SIV3">
    <property type="expression patterns" value="baseline and differential"/>
</dbReference>
<dbReference type="GO" id="GO:0005634">
    <property type="term" value="C:nucleus"/>
    <property type="evidence" value="ECO:0007669"/>
    <property type="project" value="UniProtKB-SubCell"/>
</dbReference>
<dbReference type="GO" id="GO:0003677">
    <property type="term" value="F:DNA binding"/>
    <property type="evidence" value="ECO:0007669"/>
    <property type="project" value="UniProtKB-KW"/>
</dbReference>
<dbReference type="GO" id="GO:0003700">
    <property type="term" value="F:DNA-binding transcription factor activity"/>
    <property type="evidence" value="ECO:0007669"/>
    <property type="project" value="InterPro"/>
</dbReference>
<dbReference type="GO" id="GO:1900056">
    <property type="term" value="P:negative regulation of leaf senescence"/>
    <property type="evidence" value="ECO:0000315"/>
    <property type="project" value="UniProtKB"/>
</dbReference>
<dbReference type="GO" id="GO:0045893">
    <property type="term" value="P:positive regulation of DNA-templated transcription"/>
    <property type="evidence" value="ECO:0007669"/>
    <property type="project" value="InterPro"/>
</dbReference>
<dbReference type="FunFam" id="1.10.10.60:FF:000007">
    <property type="entry name" value="Two-component response regulator"/>
    <property type="match status" value="1"/>
</dbReference>
<dbReference type="Gene3D" id="1.10.10.60">
    <property type="entry name" value="Homeodomain-like"/>
    <property type="match status" value="1"/>
</dbReference>
<dbReference type="InterPro" id="IPR044825">
    <property type="entry name" value="GLK1/2-like"/>
</dbReference>
<dbReference type="InterPro" id="IPR009057">
    <property type="entry name" value="Homeodomain-like_sf"/>
</dbReference>
<dbReference type="InterPro" id="IPR017930">
    <property type="entry name" value="Myb_dom"/>
</dbReference>
<dbReference type="InterPro" id="IPR006447">
    <property type="entry name" value="Myb_dom_plants"/>
</dbReference>
<dbReference type="InterPro" id="IPR001005">
    <property type="entry name" value="SANT/Myb"/>
</dbReference>
<dbReference type="NCBIfam" id="TIGR01557">
    <property type="entry name" value="myb_SHAQKYF"/>
    <property type="match status" value="1"/>
</dbReference>
<dbReference type="PANTHER" id="PTHR31312">
    <property type="entry name" value="TRANSCRIPTION ACTIVATOR GLK1"/>
    <property type="match status" value="1"/>
</dbReference>
<dbReference type="PANTHER" id="PTHR31312:SF1">
    <property type="entry name" value="TRANSCRIPTION ACTIVATOR GLK1"/>
    <property type="match status" value="1"/>
</dbReference>
<dbReference type="Pfam" id="PF00249">
    <property type="entry name" value="Myb_DNA-binding"/>
    <property type="match status" value="1"/>
</dbReference>
<dbReference type="SUPFAM" id="SSF46689">
    <property type="entry name" value="Homeodomain-like"/>
    <property type="match status" value="1"/>
</dbReference>
<dbReference type="PROSITE" id="PS51294">
    <property type="entry name" value="HTH_MYB"/>
    <property type="match status" value="1"/>
</dbReference>
<sequence length="420" mass="45988">MLALSPATRDGCDGASEFLDTSCGFTIINPEEEEEFPDFADHGDLLDIIDFDDIFGVAGDVLPDLEIDPEILSGDFSNHMNASSTITTTSDKTDSQGETTKGSSGKGEEVVSKRDDVAAETVTYDGDSDRKRKYSSSASSKNNRISNNEGKRKVKVDWTPELHRRFVEAVEQLGVDKAVPSRILELMGVHCLTRHNVASHLQKYRSHRKHLLAREAEAANWTRKRHIYGVDTGANLNGRTKNGWLAPAPTLGFPPPPPVAVAPPPVHHHHFRPLHVWGHPTVDQSIMPHVWPKHLPPPSTAMPNPPFWVSDSPYWHPMHNGTTPYLPTVATRFRAPPVAGIPHALPPHHTMYKPNLGFGGARPPVDLHPSKESVDAAIGDVLTRPWLPLPLGLNPPAVDGVMTELHRHGVSEVPPTASCA</sequence>
<gene>
    <name type="primary">GLK1</name>
    <name type="synonym">GPRI1</name>
    <name type="ordered locus">At2g20570</name>
    <name type="ORF">F23N11.11</name>
</gene>
<keyword id="KW-0010">Activator</keyword>
<keyword id="KW-0025">Alternative splicing</keyword>
<keyword id="KW-0238">DNA-binding</keyword>
<keyword id="KW-0539">Nucleus</keyword>
<keyword id="KW-1185">Reference proteome</keyword>
<keyword id="KW-0804">Transcription</keyword>
<keyword id="KW-0805">Transcription regulation</keyword>
<feature type="chain" id="PRO_0000408385" description="Transcription activator GLK1">
    <location>
        <begin position="1"/>
        <end position="420"/>
    </location>
</feature>
<feature type="DNA-binding region" description="Myb-like GARP" evidence="2">
    <location>
        <begin position="150"/>
        <end position="209"/>
    </location>
</feature>
<feature type="region of interest" description="Disordered" evidence="3">
    <location>
        <begin position="74"/>
        <end position="152"/>
    </location>
</feature>
<feature type="compositionally biased region" description="Basic and acidic residues" evidence="3">
    <location>
        <begin position="106"/>
        <end position="117"/>
    </location>
</feature>
<feature type="compositionally biased region" description="Low complexity" evidence="3">
    <location>
        <begin position="135"/>
        <end position="147"/>
    </location>
</feature>
<organism>
    <name type="scientific">Arabidopsis thaliana</name>
    <name type="common">Mouse-ear cress</name>
    <dbReference type="NCBI Taxonomy" id="3702"/>
    <lineage>
        <taxon>Eukaryota</taxon>
        <taxon>Viridiplantae</taxon>
        <taxon>Streptophyta</taxon>
        <taxon>Embryophyta</taxon>
        <taxon>Tracheophyta</taxon>
        <taxon>Spermatophyta</taxon>
        <taxon>Magnoliopsida</taxon>
        <taxon>eudicotyledons</taxon>
        <taxon>Gunneridae</taxon>
        <taxon>Pentapetalae</taxon>
        <taxon>rosids</taxon>
        <taxon>malvids</taxon>
        <taxon>Brassicales</taxon>
        <taxon>Brassicaceae</taxon>
        <taxon>Camelineae</taxon>
        <taxon>Arabidopsis</taxon>
    </lineage>
</organism>
<reference key="1">
    <citation type="journal article" date="2002" name="Plant Cell Physiol.">
        <title>Arabidopsis GARP transcriptional activators interact with the Pro-rich activation domain shared by G-box-binding bZIP factors.</title>
        <authorList>
            <person name="Tamai H."/>
            <person name="Iwabuchi M."/>
            <person name="Meshi T."/>
        </authorList>
    </citation>
    <scope>NUCLEOTIDE SEQUENCE [MRNA]</scope>
    <scope>FUNCTION</scope>
</reference>
<reference key="2">
    <citation type="journal article" date="2002" name="Plant J.">
        <title>GLK gene pairs regulate chloroplast development in diverse plant species.</title>
        <authorList>
            <person name="Fitter D.W."/>
            <person name="Martin D.J."/>
            <person name="Copley M.J."/>
            <person name="Scotland R.W."/>
            <person name="Langdale J.A."/>
        </authorList>
    </citation>
    <scope>NUCLEOTIDE SEQUENCE [GENOMIC DNA / MRNA]</scope>
    <scope>FUNCTION</scope>
    <scope>TISSUE SPECIFICITY</scope>
    <scope>INDUCTION</scope>
    <scope>DISRUPTION PHENOTYPE</scope>
</reference>
<reference key="3">
    <citation type="journal article" date="1999" name="Nature">
        <title>Sequence and analysis of chromosome 2 of the plant Arabidopsis thaliana.</title>
        <authorList>
            <person name="Lin X."/>
            <person name="Kaul S."/>
            <person name="Rounsley S.D."/>
            <person name="Shea T.P."/>
            <person name="Benito M.-I."/>
            <person name="Town C.D."/>
            <person name="Fujii C.Y."/>
            <person name="Mason T.M."/>
            <person name="Bowman C.L."/>
            <person name="Barnstead M.E."/>
            <person name="Feldblyum T.V."/>
            <person name="Buell C.R."/>
            <person name="Ketchum K.A."/>
            <person name="Lee J.J."/>
            <person name="Ronning C.M."/>
            <person name="Koo H.L."/>
            <person name="Moffat K.S."/>
            <person name="Cronin L.A."/>
            <person name="Shen M."/>
            <person name="Pai G."/>
            <person name="Van Aken S."/>
            <person name="Umayam L."/>
            <person name="Tallon L.J."/>
            <person name="Gill J.E."/>
            <person name="Adams M.D."/>
            <person name="Carrera A.J."/>
            <person name="Creasy T.H."/>
            <person name="Goodman H.M."/>
            <person name="Somerville C.R."/>
            <person name="Copenhaver G.P."/>
            <person name="Preuss D."/>
            <person name="Nierman W.C."/>
            <person name="White O."/>
            <person name="Eisen J.A."/>
            <person name="Salzberg S.L."/>
            <person name="Fraser C.M."/>
            <person name="Venter J.C."/>
        </authorList>
    </citation>
    <scope>NUCLEOTIDE SEQUENCE [LARGE SCALE GENOMIC DNA]</scope>
    <source>
        <strain>cv. Columbia</strain>
    </source>
</reference>
<reference key="4">
    <citation type="journal article" date="2017" name="Plant J.">
        <title>Araport11: a complete reannotation of the Arabidopsis thaliana reference genome.</title>
        <authorList>
            <person name="Cheng C.Y."/>
            <person name="Krishnakumar V."/>
            <person name="Chan A.P."/>
            <person name="Thibaud-Nissen F."/>
            <person name="Schobel S."/>
            <person name="Town C.D."/>
        </authorList>
    </citation>
    <scope>GENOME REANNOTATION</scope>
    <source>
        <strain>cv. Columbia</strain>
    </source>
</reference>
<reference key="5">
    <citation type="journal article" date="2003" name="Science">
        <title>Empirical analysis of transcriptional activity in the Arabidopsis genome.</title>
        <authorList>
            <person name="Yamada K."/>
            <person name="Lim J."/>
            <person name="Dale J.M."/>
            <person name="Chen H."/>
            <person name="Shinn P."/>
            <person name="Palm C.J."/>
            <person name="Southwick A.M."/>
            <person name="Wu H.C."/>
            <person name="Kim C.J."/>
            <person name="Nguyen M."/>
            <person name="Pham P.K."/>
            <person name="Cheuk R.F."/>
            <person name="Karlin-Newmann G."/>
            <person name="Liu S.X."/>
            <person name="Lam B."/>
            <person name="Sakano H."/>
            <person name="Wu T."/>
            <person name="Yu G."/>
            <person name="Miranda M."/>
            <person name="Quach H.L."/>
            <person name="Tripp M."/>
            <person name="Chang C.H."/>
            <person name="Lee J.M."/>
            <person name="Toriumi M.J."/>
            <person name="Chan M.M."/>
            <person name="Tang C.C."/>
            <person name="Onodera C.S."/>
            <person name="Deng J.M."/>
            <person name="Akiyama K."/>
            <person name="Ansari Y."/>
            <person name="Arakawa T."/>
            <person name="Banh J."/>
            <person name="Banno F."/>
            <person name="Bowser L."/>
            <person name="Brooks S.Y."/>
            <person name="Carninci P."/>
            <person name="Chao Q."/>
            <person name="Choy N."/>
            <person name="Enju A."/>
            <person name="Goldsmith A.D."/>
            <person name="Gurjal M."/>
            <person name="Hansen N.F."/>
            <person name="Hayashizaki Y."/>
            <person name="Johnson-Hopson C."/>
            <person name="Hsuan V.W."/>
            <person name="Iida K."/>
            <person name="Karnes M."/>
            <person name="Khan S."/>
            <person name="Koesema E."/>
            <person name="Ishida J."/>
            <person name="Jiang P.X."/>
            <person name="Jones T."/>
            <person name="Kawai J."/>
            <person name="Kamiya A."/>
            <person name="Meyers C."/>
            <person name="Nakajima M."/>
            <person name="Narusaka M."/>
            <person name="Seki M."/>
            <person name="Sakurai T."/>
            <person name="Satou M."/>
            <person name="Tamse R."/>
            <person name="Vaysberg M."/>
            <person name="Wallender E.K."/>
            <person name="Wong C."/>
            <person name="Yamamura Y."/>
            <person name="Yuan S."/>
            <person name="Shinozaki K."/>
            <person name="Davis R.W."/>
            <person name="Theologis A."/>
            <person name="Ecker J.R."/>
        </authorList>
    </citation>
    <scope>NUCLEOTIDE SEQUENCE [LARGE SCALE MRNA]</scope>
    <source>
        <strain>cv. Columbia</strain>
    </source>
</reference>
<reference key="6">
    <citation type="journal article" date="2007" name="Biochem. Biophys. Res. Commun.">
        <title>The GLK1 'regulon' encodes disease defense related proteins and confers resistance to Fusarium graminearum in Arabidopsis.</title>
        <authorList>
            <person name="Savitch L.V."/>
            <person name="Subramaniam R."/>
            <person name="Allard G.C."/>
            <person name="Singh J."/>
        </authorList>
    </citation>
    <scope>FUNCTION</scope>
</reference>
<reference key="7">
    <citation type="journal article" date="2008" name="Plant J.">
        <title>GLK transcription factors regulate chloroplast development in a cell-autonomous manner.</title>
        <authorList>
            <person name="Waters M.T."/>
            <person name="Moylan E.C."/>
            <person name="Langdale J.A."/>
        </authorList>
    </citation>
    <scope>FUNCTION</scope>
</reference>
<reference key="8">
    <citation type="journal article" date="2009" name="New Phytol.">
        <title>Specialization of the Golden2-like regulatory pathway during land plant evolution.</title>
        <authorList>
            <person name="Bravo-Garcia A."/>
            <person name="Yasumura Y."/>
            <person name="Langdale J.A."/>
        </authorList>
    </citation>
    <scope>FUNCTION</scope>
</reference>
<reference key="9">
    <citation type="journal article" date="2009" name="Plant Cell">
        <title>GLK transcription factors coordinate expression of the photosynthetic apparatus in Arabidopsis.</title>
        <authorList>
            <person name="Waters M.T."/>
            <person name="Wang P."/>
            <person name="Korkaric M."/>
            <person name="Capper R.G."/>
            <person name="Saunders N.J."/>
            <person name="Langdale J.A."/>
        </authorList>
    </citation>
    <scope>FUNCTION</scope>
</reference>
<reference key="10">
    <citation type="journal article" date="2009" name="Plant Physiol.">
        <title>Coordination of plastid protein import and nuclear gene expression by plastid-to-nucleus retrograde signaling.</title>
        <authorList>
            <person name="Kakizaki T."/>
            <person name="Matsumura H."/>
            <person name="Nakayama K."/>
            <person name="Che F.S."/>
            <person name="Terauchi R."/>
            <person name="Inaba T."/>
        </authorList>
    </citation>
    <scope>FUNCTION</scope>
</reference>
<reference key="11">
    <citation type="journal article" date="2011" name="Plant J.">
        <title>A brassinosteroid transcriptional network revealed by genome-wide identification of BESI target genes in Arabidopsis thaliana.</title>
        <authorList>
            <person name="Yu X."/>
            <person name="Li L."/>
            <person name="Zola J."/>
            <person name="Aluru M."/>
            <person name="Ye H."/>
            <person name="Foudree A."/>
            <person name="Guo H."/>
            <person name="Anderson S."/>
            <person name="Aluru S."/>
            <person name="Liu P."/>
            <person name="Rodermel S."/>
            <person name="Yin Y."/>
        </authorList>
    </citation>
    <scope>INDUCTION</scope>
</reference>
<reference key="12">
    <citation type="journal article" date="2013" name="EMBO Rep.">
        <title>ORE1 balances leaf senescence against maintenance by antagonizing G2-like-mediated transcription.</title>
        <authorList>
            <person name="Rauf M."/>
            <person name="Arif M."/>
            <person name="Dortay H."/>
            <person name="Matallana-Ramirez L.P."/>
            <person name="Waters M.T."/>
            <person name="Gil Nam H."/>
            <person name="Lim P.-O."/>
            <person name="Mueller-Roeber B."/>
            <person name="Balazadeh S."/>
        </authorList>
    </citation>
    <scope>FUNCTION</scope>
    <scope>DISRUPTION PHENOTYPE</scope>
    <scope>INTERACTION WITH NAC92</scope>
    <source>
        <strain>cv. Columbia</strain>
    </source>
</reference>
<evidence type="ECO:0000250" key="1">
    <source>
        <dbReference type="UniProtKB" id="Q9FFH0"/>
    </source>
</evidence>
<evidence type="ECO:0000255" key="2">
    <source>
        <dbReference type="PROSITE-ProRule" id="PRU00625"/>
    </source>
</evidence>
<evidence type="ECO:0000256" key="3">
    <source>
        <dbReference type="SAM" id="MobiDB-lite"/>
    </source>
</evidence>
<evidence type="ECO:0000269" key="4">
    <source>
    </source>
</evidence>
<evidence type="ECO:0000269" key="5">
    <source>
    </source>
</evidence>
<evidence type="ECO:0000269" key="6">
    <source>
    </source>
</evidence>
<evidence type="ECO:0000269" key="7">
    <source>
    </source>
</evidence>
<evidence type="ECO:0000269" key="8">
    <source>
    </source>
</evidence>
<evidence type="ECO:0000269" key="9">
    <source>
    </source>
</evidence>
<evidence type="ECO:0000269" key="10">
    <source>
    </source>
</evidence>
<evidence type="ECO:0000269" key="11">
    <source>
    </source>
</evidence>
<evidence type="ECO:0000269" key="12">
    <source>
    </source>
</evidence>
<proteinExistence type="evidence at protein level"/>
<protein>
    <recommendedName>
        <fullName>Transcription activator GLK1</fullName>
    </recommendedName>
    <alternativeName>
        <fullName>GBF'S PRO-RICH REGION-INTERACTING factor 1</fullName>
    </alternativeName>
    <alternativeName>
        <fullName>Golden2-like protein 1</fullName>
        <shortName>AtGLK1</shortName>
    </alternativeName>
</protein>
<accession>Q9SIV3</accession>
<accession>Q9C532</accession>
<name>GLK1_ARATH</name>